<feature type="transit peptide" description="Chloroplast" evidence="2">
    <location>
        <begin position="1"/>
        <end status="unknown"/>
    </location>
</feature>
<feature type="chain" id="PRO_0000006731" description="Peptide deformylase 1A, chloroplastic">
    <location>
        <begin status="unknown"/>
        <end position="277"/>
    </location>
</feature>
<feature type="active site" evidence="1">
    <location>
        <position position="239"/>
    </location>
</feature>
<feature type="binding site" evidence="1">
    <location>
        <position position="196"/>
    </location>
    <ligand>
        <name>Zn(2+)</name>
        <dbReference type="ChEBI" id="CHEBI:29105"/>
    </ligand>
</feature>
<feature type="binding site" evidence="1">
    <location>
        <position position="238"/>
    </location>
    <ligand>
        <name>Zn(2+)</name>
        <dbReference type="ChEBI" id="CHEBI:29105"/>
    </ligand>
</feature>
<feature type="binding site" evidence="1">
    <location>
        <position position="242"/>
    </location>
    <ligand>
        <name>Zn(2+)</name>
        <dbReference type="ChEBI" id="CHEBI:29105"/>
    </ligand>
</feature>
<keyword id="KW-0150">Chloroplast</keyword>
<keyword id="KW-0378">Hydrolase</keyword>
<keyword id="KW-0479">Metal-binding</keyword>
<keyword id="KW-0934">Plastid</keyword>
<keyword id="KW-0648">Protein biosynthesis</keyword>
<keyword id="KW-1185">Reference proteome</keyword>
<keyword id="KW-0809">Transit peptide</keyword>
<keyword id="KW-0862">Zinc</keyword>
<sequence length="277" mass="30986">MMERFPRLAQRVLSVPFTPKYLKSCKKTNPLTSHLMQLRGSQRPIFIQWNLQGRPSVCTDLISKKNYSSATARAGWFLGLGEKKKQAMPDIVKAGDPVLHEPSQDIPLEEIGSERIQKIIEEMVKVMRNAPGVGLAAPQIGIPLKIIVLEDTNEYISYAPKDETKAQDRRPFGLLVIINPKLKKKGNKTALFFEGCLSVDGFRAVVERHLEVEVTGLDRNGKAIKVDASGWQARILQHEYDHLDGTLYVDKMAPRTFRTVENLDLPLAAGCPKLGVC</sequence>
<gene>
    <name type="primary">PDF1A</name>
</gene>
<organism>
    <name type="scientific">Solanum lycopersicum</name>
    <name type="common">Tomato</name>
    <name type="synonym">Lycopersicon esculentum</name>
    <dbReference type="NCBI Taxonomy" id="4081"/>
    <lineage>
        <taxon>Eukaryota</taxon>
        <taxon>Viridiplantae</taxon>
        <taxon>Streptophyta</taxon>
        <taxon>Embryophyta</taxon>
        <taxon>Tracheophyta</taxon>
        <taxon>Spermatophyta</taxon>
        <taxon>Magnoliopsida</taxon>
        <taxon>eudicotyledons</taxon>
        <taxon>Gunneridae</taxon>
        <taxon>Pentapetalae</taxon>
        <taxon>asterids</taxon>
        <taxon>lamiids</taxon>
        <taxon>Solanales</taxon>
        <taxon>Solanaceae</taxon>
        <taxon>Solanoideae</taxon>
        <taxon>Solaneae</taxon>
        <taxon>Solanum</taxon>
        <taxon>Solanum subgen. Lycopersicon</taxon>
    </lineage>
</organism>
<accession>Q9FUZ0</accession>
<protein>
    <recommendedName>
        <fullName>Peptide deformylase 1A, chloroplastic</fullName>
        <shortName>PDF 1A</shortName>
        <ecNumber>3.5.1.88</ecNumber>
    </recommendedName>
    <alternativeName>
        <fullName>Polypeptide deformylase</fullName>
    </alternativeName>
</protein>
<dbReference type="EC" id="3.5.1.88"/>
<dbReference type="EMBL" id="AF271258">
    <property type="protein sequence ID" value="AAG33981.1"/>
    <property type="molecule type" value="mRNA"/>
</dbReference>
<dbReference type="RefSeq" id="NP_001234703.1">
    <property type="nucleotide sequence ID" value="NM_001247774.2"/>
</dbReference>
<dbReference type="RefSeq" id="NP_001303906.1">
    <property type="nucleotide sequence ID" value="NM_001316977.1"/>
</dbReference>
<dbReference type="RefSeq" id="XP_010323166.1">
    <property type="nucleotide sequence ID" value="XM_010324864.2"/>
</dbReference>
<dbReference type="RefSeq" id="XP_010323167.1">
    <property type="nucleotide sequence ID" value="XM_010324865.2"/>
</dbReference>
<dbReference type="RefSeq" id="XP_025887604.1">
    <property type="nucleotide sequence ID" value="XM_026031819.2"/>
</dbReference>
<dbReference type="RefSeq" id="XP_025887605.1">
    <property type="nucleotide sequence ID" value="XM_026031820.2"/>
</dbReference>
<dbReference type="SMR" id="Q9FUZ0"/>
<dbReference type="FunCoup" id="Q9FUZ0">
    <property type="interactions" value="597"/>
</dbReference>
<dbReference type="STRING" id="4081.Q9FUZ0"/>
<dbReference type="PaxDb" id="4081-Solyc07g015860.2.1"/>
<dbReference type="EnsemblPlants" id="Solyc07g015860.3.1">
    <property type="protein sequence ID" value="Solyc07g015860.3.1"/>
    <property type="gene ID" value="Solyc07g015860.3"/>
</dbReference>
<dbReference type="GeneID" id="544225"/>
<dbReference type="Gramene" id="Solyc07g015860.3.1">
    <property type="protein sequence ID" value="Solyc07g015860.3.1"/>
    <property type="gene ID" value="Solyc07g015860.3"/>
</dbReference>
<dbReference type="KEGG" id="sly:544225"/>
<dbReference type="eggNOG" id="KOG3137">
    <property type="taxonomic scope" value="Eukaryota"/>
</dbReference>
<dbReference type="HOGENOM" id="CLU_061901_5_0_1"/>
<dbReference type="InParanoid" id="Q9FUZ0"/>
<dbReference type="OMA" id="HLYYDHI"/>
<dbReference type="OrthoDB" id="276063at2759"/>
<dbReference type="PhylomeDB" id="Q9FUZ0"/>
<dbReference type="SABIO-RK" id="Q9FUZ0"/>
<dbReference type="Proteomes" id="UP000004994">
    <property type="component" value="Chromosome 7"/>
</dbReference>
<dbReference type="GO" id="GO:0009570">
    <property type="term" value="C:chloroplast stroma"/>
    <property type="evidence" value="ECO:0007669"/>
    <property type="project" value="UniProtKB-SubCell"/>
</dbReference>
<dbReference type="GO" id="GO:0005739">
    <property type="term" value="C:mitochondrion"/>
    <property type="evidence" value="ECO:0000318"/>
    <property type="project" value="GO_Central"/>
</dbReference>
<dbReference type="GO" id="GO:0046872">
    <property type="term" value="F:metal ion binding"/>
    <property type="evidence" value="ECO:0007669"/>
    <property type="project" value="UniProtKB-KW"/>
</dbReference>
<dbReference type="GO" id="GO:0042586">
    <property type="term" value="F:peptide deformylase activity"/>
    <property type="evidence" value="ECO:0000318"/>
    <property type="project" value="GO_Central"/>
</dbReference>
<dbReference type="GO" id="GO:0043686">
    <property type="term" value="P:co-translational protein modification"/>
    <property type="evidence" value="ECO:0000318"/>
    <property type="project" value="GO_Central"/>
</dbReference>
<dbReference type="GO" id="GO:0006412">
    <property type="term" value="P:translation"/>
    <property type="evidence" value="ECO:0007669"/>
    <property type="project" value="UniProtKB-KW"/>
</dbReference>
<dbReference type="CDD" id="cd00487">
    <property type="entry name" value="Pep_deformylase"/>
    <property type="match status" value="1"/>
</dbReference>
<dbReference type="FunFam" id="3.90.45.10:FF:000003">
    <property type="entry name" value="Peptide deformylase"/>
    <property type="match status" value="1"/>
</dbReference>
<dbReference type="Gene3D" id="3.90.45.10">
    <property type="entry name" value="Peptide deformylase"/>
    <property type="match status" value="1"/>
</dbReference>
<dbReference type="HAMAP" id="MF_00163">
    <property type="entry name" value="Pep_deformylase"/>
    <property type="match status" value="1"/>
</dbReference>
<dbReference type="InterPro" id="IPR023635">
    <property type="entry name" value="Peptide_deformylase"/>
</dbReference>
<dbReference type="InterPro" id="IPR036821">
    <property type="entry name" value="Peptide_deformylase_sf"/>
</dbReference>
<dbReference type="NCBIfam" id="TIGR00079">
    <property type="entry name" value="pept_deformyl"/>
    <property type="match status" value="1"/>
</dbReference>
<dbReference type="NCBIfam" id="NF001159">
    <property type="entry name" value="PRK00150.1-3"/>
    <property type="match status" value="1"/>
</dbReference>
<dbReference type="PANTHER" id="PTHR10458">
    <property type="entry name" value="PEPTIDE DEFORMYLASE"/>
    <property type="match status" value="1"/>
</dbReference>
<dbReference type="PANTHER" id="PTHR10458:SF2">
    <property type="entry name" value="PEPTIDE DEFORMYLASE, MITOCHONDRIAL"/>
    <property type="match status" value="1"/>
</dbReference>
<dbReference type="Pfam" id="PF01327">
    <property type="entry name" value="Pep_deformylase"/>
    <property type="match status" value="1"/>
</dbReference>
<dbReference type="PRINTS" id="PR01576">
    <property type="entry name" value="PDEFORMYLASE"/>
</dbReference>
<dbReference type="SUPFAM" id="SSF56420">
    <property type="entry name" value="Peptide deformylase"/>
    <property type="match status" value="1"/>
</dbReference>
<evidence type="ECO:0000250" key="1"/>
<evidence type="ECO:0000255" key="2"/>
<evidence type="ECO:0000305" key="3"/>
<name>DEF1A_SOLLC</name>
<proteinExistence type="evidence at transcript level"/>
<reference key="1">
    <citation type="journal article" date="2000" name="EMBO J.">
        <title>Identification of eukaryotic peptide deformylases reveals universality of N-terminal protein processing mechanisms.</title>
        <authorList>
            <person name="Giglione C."/>
            <person name="Serero A."/>
            <person name="Pierre M."/>
            <person name="Boisson B."/>
            <person name="Meinnel T."/>
        </authorList>
    </citation>
    <scope>NUCLEOTIDE SEQUENCE [MRNA]</scope>
</reference>
<comment type="function">
    <text evidence="1">Removes the formyl group from the N-terminal Met of newly synthesized proteins.</text>
</comment>
<comment type="catalytic activity">
    <reaction>
        <text>N-terminal N-formyl-L-methionyl-[peptide] + H2O = N-terminal L-methionyl-[peptide] + formate</text>
        <dbReference type="Rhea" id="RHEA:24420"/>
        <dbReference type="Rhea" id="RHEA-COMP:10639"/>
        <dbReference type="Rhea" id="RHEA-COMP:10640"/>
        <dbReference type="ChEBI" id="CHEBI:15377"/>
        <dbReference type="ChEBI" id="CHEBI:15740"/>
        <dbReference type="ChEBI" id="CHEBI:49298"/>
        <dbReference type="ChEBI" id="CHEBI:64731"/>
        <dbReference type="EC" id="3.5.1.88"/>
    </reaction>
</comment>
<comment type="cofactor">
    <cofactor evidence="1">
        <name>Zn(2+)</name>
        <dbReference type="ChEBI" id="CHEBI:29105"/>
    </cofactor>
    <text evidence="1">Binds 1 Zn(2+) ion per subunit.</text>
</comment>
<comment type="subcellular location">
    <subcellularLocation>
        <location evidence="1">Plastid</location>
        <location evidence="1">Chloroplast stroma</location>
    </subcellularLocation>
</comment>
<comment type="similarity">
    <text evidence="3">Belongs to the polypeptide deformylase family.</text>
</comment>